<reference key="1">
    <citation type="submission" date="2007-04" db="EMBL/GenBank/DDBJ databases">
        <title>Complete sequence of Pseudomonas mendocina ymp.</title>
        <authorList>
            <consortium name="US DOE Joint Genome Institute"/>
            <person name="Copeland A."/>
            <person name="Lucas S."/>
            <person name="Lapidus A."/>
            <person name="Barry K."/>
            <person name="Glavina del Rio T."/>
            <person name="Dalin E."/>
            <person name="Tice H."/>
            <person name="Pitluck S."/>
            <person name="Kiss H."/>
            <person name="Brettin T."/>
            <person name="Detter J.C."/>
            <person name="Bruce D."/>
            <person name="Han C."/>
            <person name="Schmutz J."/>
            <person name="Larimer F."/>
            <person name="Land M."/>
            <person name="Hauser L."/>
            <person name="Kyrpides N."/>
            <person name="Mikhailova N."/>
            <person name="Hersman L."/>
            <person name="Dubois J."/>
            <person name="Maurice P."/>
            <person name="Richardson P."/>
        </authorList>
    </citation>
    <scope>NUCLEOTIDE SEQUENCE [LARGE SCALE GENOMIC DNA]</scope>
    <source>
        <strain>ymp</strain>
    </source>
</reference>
<protein>
    <recommendedName>
        <fullName evidence="1">Large ribosomal subunit protein bL19</fullName>
    </recommendedName>
    <alternativeName>
        <fullName evidence="2">50S ribosomal protein L19</fullName>
    </alternativeName>
</protein>
<organism>
    <name type="scientific">Ectopseudomonas mendocina (strain ymp)</name>
    <name type="common">Pseudomonas mendocina</name>
    <dbReference type="NCBI Taxonomy" id="399739"/>
    <lineage>
        <taxon>Bacteria</taxon>
        <taxon>Pseudomonadati</taxon>
        <taxon>Pseudomonadota</taxon>
        <taxon>Gammaproteobacteria</taxon>
        <taxon>Pseudomonadales</taxon>
        <taxon>Pseudomonadaceae</taxon>
        <taxon>Ectopseudomonas</taxon>
    </lineage>
</organism>
<sequence length="116" mass="13056">MTNKIIQMLEAEQMNKEIPTFAPGDTVVVQVKVKEGDRQRLQAFEGVVIAKRNRGLNSAFTVRKISSGVGVERTFQTYSPLVDSLSVKRRGDVRKAKLYYLRDLSGKAARIKEKLS</sequence>
<comment type="function">
    <text evidence="1">This protein is located at the 30S-50S ribosomal subunit interface and may play a role in the structure and function of the aminoacyl-tRNA binding site.</text>
</comment>
<comment type="similarity">
    <text evidence="1">Belongs to the bacterial ribosomal protein bL19 family.</text>
</comment>
<dbReference type="EMBL" id="CP000680">
    <property type="protein sequence ID" value="ABP86150.1"/>
    <property type="molecule type" value="Genomic_DNA"/>
</dbReference>
<dbReference type="SMR" id="A4XXT4"/>
<dbReference type="STRING" id="399739.Pmen_3398"/>
<dbReference type="KEGG" id="pmy:Pmen_3398"/>
<dbReference type="eggNOG" id="COG0335">
    <property type="taxonomic scope" value="Bacteria"/>
</dbReference>
<dbReference type="HOGENOM" id="CLU_103507_2_1_6"/>
<dbReference type="OrthoDB" id="9803541at2"/>
<dbReference type="GO" id="GO:0022625">
    <property type="term" value="C:cytosolic large ribosomal subunit"/>
    <property type="evidence" value="ECO:0007669"/>
    <property type="project" value="TreeGrafter"/>
</dbReference>
<dbReference type="GO" id="GO:0003735">
    <property type="term" value="F:structural constituent of ribosome"/>
    <property type="evidence" value="ECO:0007669"/>
    <property type="project" value="InterPro"/>
</dbReference>
<dbReference type="GO" id="GO:0006412">
    <property type="term" value="P:translation"/>
    <property type="evidence" value="ECO:0007669"/>
    <property type="project" value="UniProtKB-UniRule"/>
</dbReference>
<dbReference type="FunFam" id="2.30.30.790:FF:000001">
    <property type="entry name" value="50S ribosomal protein L19"/>
    <property type="match status" value="1"/>
</dbReference>
<dbReference type="Gene3D" id="2.30.30.790">
    <property type="match status" value="1"/>
</dbReference>
<dbReference type="HAMAP" id="MF_00402">
    <property type="entry name" value="Ribosomal_bL19"/>
    <property type="match status" value="1"/>
</dbReference>
<dbReference type="InterPro" id="IPR001857">
    <property type="entry name" value="Ribosomal_bL19"/>
</dbReference>
<dbReference type="InterPro" id="IPR018257">
    <property type="entry name" value="Ribosomal_bL19_CS"/>
</dbReference>
<dbReference type="InterPro" id="IPR038657">
    <property type="entry name" value="Ribosomal_bL19_sf"/>
</dbReference>
<dbReference type="InterPro" id="IPR008991">
    <property type="entry name" value="Translation_prot_SH3-like_sf"/>
</dbReference>
<dbReference type="NCBIfam" id="TIGR01024">
    <property type="entry name" value="rplS_bact"/>
    <property type="match status" value="1"/>
</dbReference>
<dbReference type="PANTHER" id="PTHR15680:SF9">
    <property type="entry name" value="LARGE RIBOSOMAL SUBUNIT PROTEIN BL19M"/>
    <property type="match status" value="1"/>
</dbReference>
<dbReference type="PANTHER" id="PTHR15680">
    <property type="entry name" value="RIBOSOMAL PROTEIN L19"/>
    <property type="match status" value="1"/>
</dbReference>
<dbReference type="Pfam" id="PF01245">
    <property type="entry name" value="Ribosomal_L19"/>
    <property type="match status" value="1"/>
</dbReference>
<dbReference type="PIRSF" id="PIRSF002191">
    <property type="entry name" value="Ribosomal_L19"/>
    <property type="match status" value="1"/>
</dbReference>
<dbReference type="PRINTS" id="PR00061">
    <property type="entry name" value="RIBOSOMALL19"/>
</dbReference>
<dbReference type="SUPFAM" id="SSF50104">
    <property type="entry name" value="Translation proteins SH3-like domain"/>
    <property type="match status" value="1"/>
</dbReference>
<dbReference type="PROSITE" id="PS01015">
    <property type="entry name" value="RIBOSOMAL_L19"/>
    <property type="match status" value="1"/>
</dbReference>
<proteinExistence type="inferred from homology"/>
<accession>A4XXT4</accession>
<evidence type="ECO:0000255" key="1">
    <source>
        <dbReference type="HAMAP-Rule" id="MF_00402"/>
    </source>
</evidence>
<evidence type="ECO:0000305" key="2"/>
<name>RL19_ECTM1</name>
<feature type="chain" id="PRO_1000049722" description="Large ribosomal subunit protein bL19">
    <location>
        <begin position="1"/>
        <end position="116"/>
    </location>
</feature>
<gene>
    <name evidence="1" type="primary">rplS</name>
    <name type="ordered locus">Pmen_3398</name>
</gene>
<keyword id="KW-0687">Ribonucleoprotein</keyword>
<keyword id="KW-0689">Ribosomal protein</keyword>